<gene>
    <name evidence="1" type="primary">sspO</name>
    <name type="ordered locus">BPUM_1698</name>
</gene>
<accession>A8FDQ9</accession>
<reference key="1">
    <citation type="journal article" date="2007" name="PLoS ONE">
        <title>Paradoxical DNA repair and peroxide resistance gene conservation in Bacillus pumilus SAFR-032.</title>
        <authorList>
            <person name="Gioia J."/>
            <person name="Yerrapragada S."/>
            <person name="Qin X."/>
            <person name="Jiang H."/>
            <person name="Igboeli O.C."/>
            <person name="Muzny D."/>
            <person name="Dugan-Rocha S."/>
            <person name="Ding Y."/>
            <person name="Hawes A."/>
            <person name="Liu W."/>
            <person name="Perez L."/>
            <person name="Kovar C."/>
            <person name="Dinh H."/>
            <person name="Lee S."/>
            <person name="Nazareth L."/>
            <person name="Blyth P."/>
            <person name="Holder M."/>
            <person name="Buhay C."/>
            <person name="Tirumalai M.R."/>
            <person name="Liu Y."/>
            <person name="Dasgupta I."/>
            <person name="Bokhetache L."/>
            <person name="Fujita M."/>
            <person name="Karouia F."/>
            <person name="Eswara Moorthy P."/>
            <person name="Siefert J."/>
            <person name="Uzman A."/>
            <person name="Buzumbo P."/>
            <person name="Verma A."/>
            <person name="Zwiya H."/>
            <person name="McWilliams B.D."/>
            <person name="Olowu A."/>
            <person name="Clinkenbeard K.D."/>
            <person name="Newcombe D."/>
            <person name="Golebiewski L."/>
            <person name="Petrosino J.F."/>
            <person name="Nicholson W.L."/>
            <person name="Fox G.E."/>
            <person name="Venkateswaran K."/>
            <person name="Highlander S.K."/>
            <person name="Weinstock G.M."/>
        </authorList>
    </citation>
    <scope>NUCLEOTIDE SEQUENCE [LARGE SCALE GENOMIC DNA]</scope>
    <source>
        <strain>SAFR-032</strain>
    </source>
</reference>
<feature type="chain" id="PRO_0000329092" description="Small, acid-soluble spore protein O">
    <location>
        <begin position="1"/>
        <end position="48"/>
    </location>
</feature>
<feature type="region of interest" description="Disordered" evidence="2">
    <location>
        <begin position="1"/>
        <end position="23"/>
    </location>
</feature>
<keyword id="KW-0749">Sporulation</keyword>
<name>SSPO_BACP2</name>
<evidence type="ECO:0000255" key="1">
    <source>
        <dbReference type="HAMAP-Rule" id="MF_00665"/>
    </source>
</evidence>
<evidence type="ECO:0000256" key="2">
    <source>
        <dbReference type="SAM" id="MobiDB-lite"/>
    </source>
</evidence>
<proteinExistence type="inferred from homology"/>
<organism>
    <name type="scientific">Bacillus pumilus (strain SAFR-032)</name>
    <dbReference type="NCBI Taxonomy" id="315750"/>
    <lineage>
        <taxon>Bacteria</taxon>
        <taxon>Bacillati</taxon>
        <taxon>Bacillota</taxon>
        <taxon>Bacilli</taxon>
        <taxon>Bacillales</taxon>
        <taxon>Bacillaceae</taxon>
        <taxon>Bacillus</taxon>
    </lineage>
</organism>
<sequence>MTKRKANHVINGMNAAKSQGNGAGYIEDDQLVLTAEQRQNNKKRKKNQ</sequence>
<dbReference type="EMBL" id="CP000813">
    <property type="protein sequence ID" value="ABV62376.1"/>
    <property type="molecule type" value="Genomic_DNA"/>
</dbReference>
<dbReference type="RefSeq" id="WP_012010106.1">
    <property type="nucleotide sequence ID" value="NZ_VEIA01000012.1"/>
</dbReference>
<dbReference type="STRING" id="315750.BPUM_1698"/>
<dbReference type="GeneID" id="5620960"/>
<dbReference type="KEGG" id="bpu:BPUM_1698"/>
<dbReference type="HOGENOM" id="CLU_206342_0_0_9"/>
<dbReference type="OrthoDB" id="2692139at2"/>
<dbReference type="Proteomes" id="UP000001355">
    <property type="component" value="Chromosome"/>
</dbReference>
<dbReference type="GO" id="GO:0042601">
    <property type="term" value="C:endospore-forming forespore"/>
    <property type="evidence" value="ECO:0007669"/>
    <property type="project" value="InterPro"/>
</dbReference>
<dbReference type="GO" id="GO:0030436">
    <property type="term" value="P:asexual sporulation"/>
    <property type="evidence" value="ECO:0007669"/>
    <property type="project" value="UniProtKB-UniRule"/>
</dbReference>
<dbReference type="GO" id="GO:0030435">
    <property type="term" value="P:sporulation resulting in formation of a cellular spore"/>
    <property type="evidence" value="ECO:0007669"/>
    <property type="project" value="UniProtKB-KW"/>
</dbReference>
<dbReference type="HAMAP" id="MF_00665">
    <property type="entry name" value="SspO"/>
    <property type="match status" value="1"/>
</dbReference>
<dbReference type="InterPro" id="IPR012613">
    <property type="entry name" value="SASP_SspO"/>
</dbReference>
<dbReference type="NCBIfam" id="TIGR02864">
    <property type="entry name" value="spore_sspO"/>
    <property type="match status" value="1"/>
</dbReference>
<dbReference type="Pfam" id="PF08175">
    <property type="entry name" value="SspO"/>
    <property type="match status" value="1"/>
</dbReference>
<comment type="subcellular location">
    <subcellularLocation>
        <location evidence="1">Spore core</location>
    </subcellularLocation>
</comment>
<comment type="induction">
    <text evidence="1">Expressed only in the forespore compartment of sporulating cells.</text>
</comment>
<comment type="similarity">
    <text evidence="1">Belongs to the SspO family.</text>
</comment>
<protein>
    <recommendedName>
        <fullName evidence="1">Small, acid-soluble spore protein O</fullName>
        <shortName evidence="1">SASP O</shortName>
    </recommendedName>
</protein>